<proteinExistence type="inferred from homology"/>
<gene>
    <name evidence="1" type="primary">ilvC</name>
    <name type="ordered locus">ECUMN_4300</name>
</gene>
<name>ILVC_ECOLU</name>
<protein>
    <recommendedName>
        <fullName evidence="1">Ketol-acid reductoisomerase (NADP(+))</fullName>
        <shortName evidence="1">KARI</shortName>
        <ecNumber evidence="1">1.1.1.86</ecNumber>
    </recommendedName>
    <alternativeName>
        <fullName evidence="1">Acetohydroxy-acid isomeroreductase</fullName>
        <shortName evidence="1">AHIR</shortName>
    </alternativeName>
    <alternativeName>
        <fullName evidence="1">Alpha-keto-beta-hydroxylacyl reductoisomerase</fullName>
    </alternativeName>
    <alternativeName>
        <fullName evidence="1">Ketol-acid reductoisomerase type 2</fullName>
    </alternativeName>
    <alternativeName>
        <fullName evidence="1">Ketol-acid reductoisomerase type II</fullName>
    </alternativeName>
</protein>
<keyword id="KW-0028">Amino-acid biosynthesis</keyword>
<keyword id="KW-0100">Branched-chain amino acid biosynthesis</keyword>
<keyword id="KW-0460">Magnesium</keyword>
<keyword id="KW-0479">Metal-binding</keyword>
<keyword id="KW-0521">NADP</keyword>
<keyword id="KW-0560">Oxidoreductase</keyword>
<keyword id="KW-0677">Repeat</keyword>
<organism>
    <name type="scientific">Escherichia coli O17:K52:H18 (strain UMN026 / ExPEC)</name>
    <dbReference type="NCBI Taxonomy" id="585056"/>
    <lineage>
        <taxon>Bacteria</taxon>
        <taxon>Pseudomonadati</taxon>
        <taxon>Pseudomonadota</taxon>
        <taxon>Gammaproteobacteria</taxon>
        <taxon>Enterobacterales</taxon>
        <taxon>Enterobacteriaceae</taxon>
        <taxon>Escherichia</taxon>
    </lineage>
</organism>
<feature type="chain" id="PRO_1000190959" description="Ketol-acid reductoisomerase (NADP(+))">
    <location>
        <begin position="1"/>
        <end position="491"/>
    </location>
</feature>
<feature type="domain" description="KARI N-terminal Rossmann" evidence="2">
    <location>
        <begin position="15"/>
        <end position="208"/>
    </location>
</feature>
<feature type="domain" description="KARI C-terminal knotted 1" evidence="3">
    <location>
        <begin position="209"/>
        <end position="344"/>
    </location>
</feature>
<feature type="domain" description="KARI C-terminal knotted 2" evidence="3">
    <location>
        <begin position="345"/>
        <end position="484"/>
    </location>
</feature>
<feature type="active site" evidence="1">
    <location>
        <position position="132"/>
    </location>
</feature>
<feature type="binding site" evidence="1">
    <location>
        <begin position="45"/>
        <end position="48"/>
    </location>
    <ligand>
        <name>NADP(+)</name>
        <dbReference type="ChEBI" id="CHEBI:58349"/>
    </ligand>
</feature>
<feature type="binding site" evidence="1">
    <location>
        <position position="68"/>
    </location>
    <ligand>
        <name>NADP(+)</name>
        <dbReference type="ChEBI" id="CHEBI:58349"/>
    </ligand>
</feature>
<feature type="binding site" evidence="1">
    <location>
        <position position="76"/>
    </location>
    <ligand>
        <name>NADP(+)</name>
        <dbReference type="ChEBI" id="CHEBI:58349"/>
    </ligand>
</feature>
<feature type="binding site" evidence="1">
    <location>
        <position position="78"/>
    </location>
    <ligand>
        <name>NADP(+)</name>
        <dbReference type="ChEBI" id="CHEBI:58349"/>
    </ligand>
</feature>
<feature type="binding site" evidence="1">
    <location>
        <begin position="108"/>
        <end position="110"/>
    </location>
    <ligand>
        <name>NADP(+)</name>
        <dbReference type="ChEBI" id="CHEBI:58349"/>
    </ligand>
</feature>
<feature type="binding site" evidence="1">
    <location>
        <position position="158"/>
    </location>
    <ligand>
        <name>NADP(+)</name>
        <dbReference type="ChEBI" id="CHEBI:58349"/>
    </ligand>
</feature>
<feature type="binding site" evidence="1">
    <location>
        <position position="217"/>
    </location>
    <ligand>
        <name>Mg(2+)</name>
        <dbReference type="ChEBI" id="CHEBI:18420"/>
        <label>1</label>
    </ligand>
</feature>
<feature type="binding site" evidence="1">
    <location>
        <position position="217"/>
    </location>
    <ligand>
        <name>Mg(2+)</name>
        <dbReference type="ChEBI" id="CHEBI:18420"/>
        <label>2</label>
    </ligand>
</feature>
<feature type="binding site" evidence="1">
    <location>
        <position position="221"/>
    </location>
    <ligand>
        <name>Mg(2+)</name>
        <dbReference type="ChEBI" id="CHEBI:18420"/>
        <label>1</label>
    </ligand>
</feature>
<feature type="binding site" evidence="1">
    <location>
        <position position="389"/>
    </location>
    <ligand>
        <name>Mg(2+)</name>
        <dbReference type="ChEBI" id="CHEBI:18420"/>
        <label>2</label>
    </ligand>
</feature>
<feature type="binding site" evidence="1">
    <location>
        <position position="393"/>
    </location>
    <ligand>
        <name>Mg(2+)</name>
        <dbReference type="ChEBI" id="CHEBI:18420"/>
        <label>2</label>
    </ligand>
</feature>
<feature type="binding site" evidence="1">
    <location>
        <position position="414"/>
    </location>
    <ligand>
        <name>substrate</name>
    </ligand>
</feature>
<evidence type="ECO:0000255" key="1">
    <source>
        <dbReference type="HAMAP-Rule" id="MF_00435"/>
    </source>
</evidence>
<evidence type="ECO:0000255" key="2">
    <source>
        <dbReference type="PROSITE-ProRule" id="PRU01197"/>
    </source>
</evidence>
<evidence type="ECO:0000255" key="3">
    <source>
        <dbReference type="PROSITE-ProRule" id="PRU01198"/>
    </source>
</evidence>
<sequence>MANYFNTLNLRQQLAQLGKCRFMGRDEFADGASYLQGKKVVIVGCGAQGLNQGLNMRDSGLDISYALRKEAIAEKRASWRKATENGFKVGTYEELIPQADLVVNLTPDKQHSDVVRTVQPLMKDGAALGYSHGFNIVEVGEQIRKDITVVMVAPKCPGTEVREEYKRGFGVPTLIAVHPENDPKGEGMAIAKAWAAATGGHRAGVLESSFVAEVKSDLMGEQTILCGMLQAGSLLCFDKLVEEGTDPAYAEKLIQFGWETITEALKQGGITLMMDRLSNPAKLRAYALSEQLKEIMAPLFQKHMDDIISGEFSSGMMADWANDDKKLLTWREETGKTAFETAPQYEGKIGEQEYFDKGVLMIAMVKAGVELAFETMVDSGIIEESAYYESLHELPLIANTIARKRLYEMNVVISDTAEYGNYLFSYACVPLLKPFMAELQPGDLGKAIPEGAVDNAQLRDVNEAIRSHAIEQVGKKLRGYMTDMKRIAVAG</sequence>
<accession>B7NF81</accession>
<dbReference type="EC" id="1.1.1.86" evidence="1"/>
<dbReference type="EMBL" id="CU928163">
    <property type="protein sequence ID" value="CAR15436.1"/>
    <property type="molecule type" value="Genomic_DNA"/>
</dbReference>
<dbReference type="RefSeq" id="WP_000024951.1">
    <property type="nucleotide sequence ID" value="NC_011751.1"/>
</dbReference>
<dbReference type="RefSeq" id="YP_002414931.1">
    <property type="nucleotide sequence ID" value="NC_011751.1"/>
</dbReference>
<dbReference type="SMR" id="B7NF81"/>
<dbReference type="STRING" id="585056.ECUMN_4300"/>
<dbReference type="GeneID" id="75204765"/>
<dbReference type="KEGG" id="eum:ECUMN_4300"/>
<dbReference type="PATRIC" id="fig|585056.7.peg.4467"/>
<dbReference type="HOGENOM" id="CLU_551905_0_0_6"/>
<dbReference type="UniPathway" id="UPA00047">
    <property type="reaction ID" value="UER00056"/>
</dbReference>
<dbReference type="UniPathway" id="UPA00049">
    <property type="reaction ID" value="UER00060"/>
</dbReference>
<dbReference type="Proteomes" id="UP000007097">
    <property type="component" value="Chromosome"/>
</dbReference>
<dbReference type="GO" id="GO:0005829">
    <property type="term" value="C:cytosol"/>
    <property type="evidence" value="ECO:0007669"/>
    <property type="project" value="TreeGrafter"/>
</dbReference>
<dbReference type="GO" id="GO:0004455">
    <property type="term" value="F:ketol-acid reductoisomerase activity"/>
    <property type="evidence" value="ECO:0007669"/>
    <property type="project" value="UniProtKB-UniRule"/>
</dbReference>
<dbReference type="GO" id="GO:0000287">
    <property type="term" value="F:magnesium ion binding"/>
    <property type="evidence" value="ECO:0007669"/>
    <property type="project" value="UniProtKB-UniRule"/>
</dbReference>
<dbReference type="GO" id="GO:0009097">
    <property type="term" value="P:isoleucine biosynthetic process"/>
    <property type="evidence" value="ECO:0007669"/>
    <property type="project" value="UniProtKB-UniRule"/>
</dbReference>
<dbReference type="GO" id="GO:0009099">
    <property type="term" value="P:L-valine biosynthetic process"/>
    <property type="evidence" value="ECO:0007669"/>
    <property type="project" value="UniProtKB-UniRule"/>
</dbReference>
<dbReference type="FunFam" id="1.10.1040.10:FF:000007">
    <property type="entry name" value="Ketol-acid reductoisomerase (NADP(+))"/>
    <property type="match status" value="1"/>
</dbReference>
<dbReference type="FunFam" id="3.40.50.720:FF:000043">
    <property type="entry name" value="Ketol-acid reductoisomerase (NADP(+))"/>
    <property type="match status" value="1"/>
</dbReference>
<dbReference type="Gene3D" id="1.10.1040.10">
    <property type="entry name" value="N-(1-d-carboxylethyl)-l-norvaline Dehydrogenase, domain 2"/>
    <property type="match status" value="1"/>
</dbReference>
<dbReference type="Gene3D" id="3.40.50.720">
    <property type="entry name" value="NAD(P)-binding Rossmann-like Domain"/>
    <property type="match status" value="1"/>
</dbReference>
<dbReference type="HAMAP" id="MF_00435">
    <property type="entry name" value="IlvC"/>
    <property type="match status" value="1"/>
</dbReference>
<dbReference type="InterPro" id="IPR008927">
    <property type="entry name" value="6-PGluconate_DH-like_C_sf"/>
</dbReference>
<dbReference type="InterPro" id="IPR013328">
    <property type="entry name" value="6PGD_dom2"/>
</dbReference>
<dbReference type="InterPro" id="IPR013023">
    <property type="entry name" value="KARI"/>
</dbReference>
<dbReference type="InterPro" id="IPR000506">
    <property type="entry name" value="KARI_C"/>
</dbReference>
<dbReference type="InterPro" id="IPR013116">
    <property type="entry name" value="KARI_N"/>
</dbReference>
<dbReference type="InterPro" id="IPR036291">
    <property type="entry name" value="NAD(P)-bd_dom_sf"/>
</dbReference>
<dbReference type="NCBIfam" id="TIGR00465">
    <property type="entry name" value="ilvC"/>
    <property type="match status" value="1"/>
</dbReference>
<dbReference type="NCBIfam" id="NF003557">
    <property type="entry name" value="PRK05225.1"/>
    <property type="match status" value="1"/>
</dbReference>
<dbReference type="PANTHER" id="PTHR21371">
    <property type="entry name" value="KETOL-ACID REDUCTOISOMERASE, MITOCHONDRIAL"/>
    <property type="match status" value="1"/>
</dbReference>
<dbReference type="PANTHER" id="PTHR21371:SF1">
    <property type="entry name" value="KETOL-ACID REDUCTOISOMERASE, MITOCHONDRIAL"/>
    <property type="match status" value="1"/>
</dbReference>
<dbReference type="Pfam" id="PF01450">
    <property type="entry name" value="KARI_C"/>
    <property type="match status" value="2"/>
</dbReference>
<dbReference type="Pfam" id="PF07991">
    <property type="entry name" value="KARI_N"/>
    <property type="match status" value="1"/>
</dbReference>
<dbReference type="SUPFAM" id="SSF48179">
    <property type="entry name" value="6-phosphogluconate dehydrogenase C-terminal domain-like"/>
    <property type="match status" value="2"/>
</dbReference>
<dbReference type="SUPFAM" id="SSF51735">
    <property type="entry name" value="NAD(P)-binding Rossmann-fold domains"/>
    <property type="match status" value="1"/>
</dbReference>
<dbReference type="PROSITE" id="PS51851">
    <property type="entry name" value="KARI_C"/>
    <property type="match status" value="2"/>
</dbReference>
<dbReference type="PROSITE" id="PS51850">
    <property type="entry name" value="KARI_N"/>
    <property type="match status" value="1"/>
</dbReference>
<comment type="function">
    <text evidence="1">Involved in the biosynthesis of branched-chain amino acids (BCAA). Catalyzes an alkyl-migration followed by a ketol-acid reduction of (S)-2-acetolactate (S2AL) to yield (R)-2,3-dihydroxy-isovalerate. In the isomerase reaction, S2AL is rearranged via a Mg-dependent methyl migration to produce 3-hydroxy-3-methyl-2-ketobutyrate (HMKB). In the reductase reaction, this 2-ketoacid undergoes a metal-dependent reduction by NADPH to yield (R)-2,3-dihydroxy-isovalerate.</text>
</comment>
<comment type="catalytic activity">
    <reaction evidence="1">
        <text>(2R)-2,3-dihydroxy-3-methylbutanoate + NADP(+) = (2S)-2-acetolactate + NADPH + H(+)</text>
        <dbReference type="Rhea" id="RHEA:22068"/>
        <dbReference type="ChEBI" id="CHEBI:15378"/>
        <dbReference type="ChEBI" id="CHEBI:49072"/>
        <dbReference type="ChEBI" id="CHEBI:57783"/>
        <dbReference type="ChEBI" id="CHEBI:58349"/>
        <dbReference type="ChEBI" id="CHEBI:58476"/>
        <dbReference type="EC" id="1.1.1.86"/>
    </reaction>
</comment>
<comment type="catalytic activity">
    <reaction evidence="1">
        <text>(2R,3R)-2,3-dihydroxy-3-methylpentanoate + NADP(+) = (S)-2-ethyl-2-hydroxy-3-oxobutanoate + NADPH + H(+)</text>
        <dbReference type="Rhea" id="RHEA:13493"/>
        <dbReference type="ChEBI" id="CHEBI:15378"/>
        <dbReference type="ChEBI" id="CHEBI:49256"/>
        <dbReference type="ChEBI" id="CHEBI:49258"/>
        <dbReference type="ChEBI" id="CHEBI:57783"/>
        <dbReference type="ChEBI" id="CHEBI:58349"/>
        <dbReference type="EC" id="1.1.1.86"/>
    </reaction>
</comment>
<comment type="cofactor">
    <cofactor evidence="1">
        <name>Mg(2+)</name>
        <dbReference type="ChEBI" id="CHEBI:18420"/>
    </cofactor>
    <text evidence="1">Binds 2 magnesium ions per subunit.</text>
</comment>
<comment type="pathway">
    <text evidence="1">Amino-acid biosynthesis; L-isoleucine biosynthesis; L-isoleucine from 2-oxobutanoate: step 2/4.</text>
</comment>
<comment type="pathway">
    <text evidence="1">Amino-acid biosynthesis; L-valine biosynthesis; L-valine from pyruvate: step 2/4.</text>
</comment>
<comment type="similarity">
    <text evidence="1">Belongs to the ketol-acid reductoisomerase family.</text>
</comment>
<reference key="1">
    <citation type="journal article" date="2009" name="PLoS Genet.">
        <title>Organised genome dynamics in the Escherichia coli species results in highly diverse adaptive paths.</title>
        <authorList>
            <person name="Touchon M."/>
            <person name="Hoede C."/>
            <person name="Tenaillon O."/>
            <person name="Barbe V."/>
            <person name="Baeriswyl S."/>
            <person name="Bidet P."/>
            <person name="Bingen E."/>
            <person name="Bonacorsi S."/>
            <person name="Bouchier C."/>
            <person name="Bouvet O."/>
            <person name="Calteau A."/>
            <person name="Chiapello H."/>
            <person name="Clermont O."/>
            <person name="Cruveiller S."/>
            <person name="Danchin A."/>
            <person name="Diard M."/>
            <person name="Dossat C."/>
            <person name="Karoui M.E."/>
            <person name="Frapy E."/>
            <person name="Garry L."/>
            <person name="Ghigo J.M."/>
            <person name="Gilles A.M."/>
            <person name="Johnson J."/>
            <person name="Le Bouguenec C."/>
            <person name="Lescat M."/>
            <person name="Mangenot S."/>
            <person name="Martinez-Jehanne V."/>
            <person name="Matic I."/>
            <person name="Nassif X."/>
            <person name="Oztas S."/>
            <person name="Petit M.A."/>
            <person name="Pichon C."/>
            <person name="Rouy Z."/>
            <person name="Ruf C.S."/>
            <person name="Schneider D."/>
            <person name="Tourret J."/>
            <person name="Vacherie B."/>
            <person name="Vallenet D."/>
            <person name="Medigue C."/>
            <person name="Rocha E.P.C."/>
            <person name="Denamur E."/>
        </authorList>
    </citation>
    <scope>NUCLEOTIDE SEQUENCE [LARGE SCALE GENOMIC DNA]</scope>
    <source>
        <strain>UMN026 / ExPEC</strain>
    </source>
</reference>